<accession>Q3ZCK1</accession>
<reference key="1">
    <citation type="submission" date="2005-08" db="EMBL/GenBank/DDBJ databases">
        <authorList>
            <consortium name="NIH - Mammalian Gene Collection (MGC) project"/>
        </authorList>
    </citation>
    <scope>NUCLEOTIDE SEQUENCE [LARGE SCALE MRNA]</scope>
    <source>
        <strain>Crossbred X Angus</strain>
        <tissue>Ileum</tissue>
    </source>
</reference>
<keyword id="KW-0007">Acetylation</keyword>
<keyword id="KW-0963">Cytoplasm</keyword>
<keyword id="KW-0396">Initiation factor</keyword>
<keyword id="KW-0648">Protein biosynthesis</keyword>
<keyword id="KW-1185">Reference proteome</keyword>
<evidence type="ECO:0000250" key="1">
    <source>
        <dbReference type="UniProtKB" id="Q9Y262"/>
    </source>
</evidence>
<evidence type="ECO:0000255" key="2">
    <source>
        <dbReference type="HAMAP-Rule" id="MF_03011"/>
    </source>
</evidence>
<evidence type="ECO:0000255" key="3">
    <source>
        <dbReference type="PROSITE-ProRule" id="PRU01185"/>
    </source>
</evidence>
<dbReference type="EMBL" id="BC102112">
    <property type="protein sequence ID" value="AAI02113.1"/>
    <property type="molecule type" value="mRNA"/>
</dbReference>
<dbReference type="RefSeq" id="NP_001030373.1">
    <property type="nucleotide sequence ID" value="NM_001035296.2"/>
</dbReference>
<dbReference type="SMR" id="Q3ZCK1"/>
<dbReference type="FunCoup" id="Q3ZCK1">
    <property type="interactions" value="3472"/>
</dbReference>
<dbReference type="STRING" id="9913.ENSBTAP00000014281"/>
<dbReference type="PaxDb" id="9913-ENSBTAP00000014281"/>
<dbReference type="PeptideAtlas" id="Q3ZCK1"/>
<dbReference type="GeneID" id="514449"/>
<dbReference type="KEGG" id="bta:514449"/>
<dbReference type="CTD" id="51386"/>
<dbReference type="VEuPathDB" id="HostDB:ENSBTAG00000010790"/>
<dbReference type="eggNOG" id="KOG3677">
    <property type="taxonomic scope" value="Eukaryota"/>
</dbReference>
<dbReference type="HOGENOM" id="CLU_029210_0_1_1"/>
<dbReference type="InParanoid" id="Q3ZCK1"/>
<dbReference type="OMA" id="AGWFIRN"/>
<dbReference type="OrthoDB" id="15082at2759"/>
<dbReference type="TreeFam" id="TF101523"/>
<dbReference type="Reactome" id="R-BTA-156827">
    <property type="pathway name" value="L13a-mediated translational silencing of Ceruloplasmin expression"/>
</dbReference>
<dbReference type="Reactome" id="R-BTA-72649">
    <property type="pathway name" value="Translation initiation complex formation"/>
</dbReference>
<dbReference type="Reactome" id="R-BTA-72689">
    <property type="pathway name" value="Formation of a pool of free 40S subunits"/>
</dbReference>
<dbReference type="Reactome" id="R-BTA-72695">
    <property type="pathway name" value="Formation of the ternary complex, and subsequently, the 43S complex"/>
</dbReference>
<dbReference type="Reactome" id="R-BTA-72702">
    <property type="pathway name" value="Ribosomal scanning and start codon recognition"/>
</dbReference>
<dbReference type="Proteomes" id="UP000009136">
    <property type="component" value="Chromosome 5"/>
</dbReference>
<dbReference type="Bgee" id="ENSBTAG00000010790">
    <property type="expression patterns" value="Expressed in myometrium and 106 other cell types or tissues"/>
</dbReference>
<dbReference type="GO" id="GO:0016282">
    <property type="term" value="C:eukaryotic 43S preinitiation complex"/>
    <property type="evidence" value="ECO:0007669"/>
    <property type="project" value="UniProtKB-UniRule"/>
</dbReference>
<dbReference type="GO" id="GO:0033290">
    <property type="term" value="C:eukaryotic 48S preinitiation complex"/>
    <property type="evidence" value="ECO:0007669"/>
    <property type="project" value="UniProtKB-UniRule"/>
</dbReference>
<dbReference type="GO" id="GO:0005852">
    <property type="term" value="C:eukaryotic translation initiation factor 3 complex"/>
    <property type="evidence" value="ECO:0000250"/>
    <property type="project" value="UniProtKB"/>
</dbReference>
<dbReference type="GO" id="GO:0003743">
    <property type="term" value="F:translation initiation factor activity"/>
    <property type="evidence" value="ECO:0007669"/>
    <property type="project" value="UniProtKB-UniRule"/>
</dbReference>
<dbReference type="GO" id="GO:0001732">
    <property type="term" value="P:formation of cytoplasmic translation initiation complex"/>
    <property type="evidence" value="ECO:0007669"/>
    <property type="project" value="UniProtKB-UniRule"/>
</dbReference>
<dbReference type="GO" id="GO:0006413">
    <property type="term" value="P:translational initiation"/>
    <property type="evidence" value="ECO:0000250"/>
    <property type="project" value="UniProtKB"/>
</dbReference>
<dbReference type="HAMAP" id="MF_03011">
    <property type="entry name" value="eIF3l"/>
    <property type="match status" value="1"/>
</dbReference>
<dbReference type="InterPro" id="IPR019382">
    <property type="entry name" value="eIF3l"/>
</dbReference>
<dbReference type="InterPro" id="IPR000717">
    <property type="entry name" value="PCI_dom"/>
</dbReference>
<dbReference type="InterPro" id="IPR011990">
    <property type="entry name" value="TPR-like_helical_dom_sf"/>
</dbReference>
<dbReference type="PANTHER" id="PTHR13242">
    <property type="entry name" value="EUKARYOTIC TRANSLATION INITIATION FACTOR 3"/>
    <property type="match status" value="1"/>
</dbReference>
<dbReference type="PANTHER" id="PTHR13242:SF0">
    <property type="entry name" value="EUKARYOTIC TRANSLATION INITIATION FACTOR 3 SUBUNIT L"/>
    <property type="match status" value="1"/>
</dbReference>
<dbReference type="Pfam" id="PF10255">
    <property type="entry name" value="Paf67"/>
    <property type="match status" value="1"/>
</dbReference>
<dbReference type="SUPFAM" id="SSF48452">
    <property type="entry name" value="TPR-like"/>
    <property type="match status" value="1"/>
</dbReference>
<dbReference type="PROSITE" id="PS50250">
    <property type="entry name" value="PCI"/>
    <property type="match status" value="1"/>
</dbReference>
<protein>
    <recommendedName>
        <fullName evidence="2">Eukaryotic translation initiation factor 3 subunit L</fullName>
        <shortName evidence="2">eIF3l</shortName>
    </recommendedName>
    <alternativeName>
        <fullName evidence="2">Eukaryotic translation initiation factor 3 subunit 6-interacting protein</fullName>
    </alternativeName>
    <alternativeName>
        <fullName evidence="2">Eukaryotic translation initiation factor 3 subunit E-interacting protein</fullName>
    </alternativeName>
</protein>
<proteinExistence type="evidence at transcript level"/>
<comment type="function">
    <text evidence="2">Component of the eukaryotic translation initiation factor 3 (eIF-3) complex, which is required for several steps in the initiation of protein synthesis. The eIF-3 complex associates with the 40S ribosome and facilitates the recruitment of eIF-1, eIF-1A, eIF-2:GTP:methionyl-tRNAi and eIF-5 to form the 43S pre-initiation complex (43S PIC). The eIF-3 complex stimulates mRNA recruitment to the 43S PIC and scanning of the mRNA for AUG recognition. The eIF-3 complex is also required for disassembly and recycling of post-termination ribosomal complexes and subsequently prevents premature joining of the 40S and 60S ribosomal subunits prior to initiation. The eIF-3 complex specifically targets and initiates translation of a subset of mRNAs involved in cell proliferation, including cell cycling, differentiation and apoptosis, and uses different modes of RNA stem-loop binding to exert either translational activation or repression.</text>
</comment>
<comment type="subunit">
    <text evidence="2">Component of the eukaryotic translation initiation factor 3 (eIF-3) complex, which is composed of 13 subunits: EIF3A, EIF3B, EIF3C, EIF3D, EIF3E, EIF3F, EIF3G, EIF3H, EIF3I, EIF3J, EIF3K, EIF3L and EIF3M. The eIF-3 complex appears to include 3 stable modules: module A is composed of EIF3A, EIF3B, EIF3G and EIF3I; module B is composed of EIF3F, EIF3H, and EIF3M; and module C is composed of EIF3C, EIF3D, EIF3E, EIF3K and EIF3L. EIF3C of module C binds EIF3B of module A and EIF3H of module B, thereby linking the three modules. EIF3J is a labile subunit that binds to the eIF-3 complex via EIF3B. The eIF-3 complex interacts with RPS6KB1 under conditions of nutrient depletion. Mitogenic stimulation leads to binding and activation of a complex composed of MTOR and RPTOR, leading to phosphorylation and release of RPS6KB1 and binding of EIF4B to eIF-3. Interacts with RRN3.</text>
</comment>
<comment type="subcellular location">
    <subcellularLocation>
        <location evidence="2">Cytoplasm</location>
    </subcellularLocation>
</comment>
<comment type="similarity">
    <text evidence="2">Belongs to the eIF-3 subunit L family.</text>
</comment>
<organism>
    <name type="scientific">Bos taurus</name>
    <name type="common">Bovine</name>
    <dbReference type="NCBI Taxonomy" id="9913"/>
    <lineage>
        <taxon>Eukaryota</taxon>
        <taxon>Metazoa</taxon>
        <taxon>Chordata</taxon>
        <taxon>Craniata</taxon>
        <taxon>Vertebrata</taxon>
        <taxon>Euteleostomi</taxon>
        <taxon>Mammalia</taxon>
        <taxon>Eutheria</taxon>
        <taxon>Laurasiatheria</taxon>
        <taxon>Artiodactyla</taxon>
        <taxon>Ruminantia</taxon>
        <taxon>Pecora</taxon>
        <taxon>Bovidae</taxon>
        <taxon>Bovinae</taxon>
        <taxon>Bos</taxon>
    </lineage>
</organism>
<gene>
    <name evidence="2" type="primary">EIF3L</name>
    <name evidence="2" type="synonym">EIF3EIP</name>
    <name evidence="2" type="synonym">EIF3S6IP</name>
</gene>
<name>EIF3L_BOVIN</name>
<feature type="initiator methionine" description="Removed" evidence="2">
    <location>
        <position position="1"/>
    </location>
</feature>
<feature type="chain" id="PRO_0000297493" description="Eukaryotic translation initiation factor 3 subunit L">
    <location>
        <begin position="2"/>
        <end position="564"/>
    </location>
</feature>
<feature type="domain" description="PCI" evidence="3">
    <location>
        <begin position="331"/>
        <end position="537"/>
    </location>
</feature>
<feature type="modified residue" description="N-acetylserine" evidence="1 2">
    <location>
        <position position="2"/>
    </location>
</feature>
<feature type="modified residue" description="N6-acetyllysine" evidence="1">
    <location>
        <position position="465"/>
    </location>
</feature>
<feature type="modified residue" description="N6-acetyllysine" evidence="1">
    <location>
        <position position="549"/>
    </location>
</feature>
<sequence>MSYPADDYESEAAYDPYAYPGDYDMHTGDPKQDLAYERQYEQQTYQVIPEVIKNFIQYFHKTVSDLIDQKVYELQASRVSSDVIDQKVYEIQDIYENSWTKLTERFFKNTPWPEAETIAPQVGNDAVFLILYKELYYRHIYAKVSGGPSLEQRFESYYNYCNLFNYILNADGPAPLELPNQWLWDIIDEFIYQFQSFSQYRCKTAKKSEEEIDFLRSNPKIWNVHSVLNVLHSLVDKSNINRQLEVYTSGGDPESVAGEYGRHSLYKMLGYFSLVGLLRLHSLLGDYYQAIKVLENIELNKKSMYSRVPECQVTTYYYVGFAYLMMRRYQDAIRVFANILLYIQRTKSMFQRTTYKYEMINKQNEQMHALLAIALTMYPMRIDESIHLQLREKYGDKMLRMQKGDPQVYEELFSYSCPKFLSPVVPNYDNVHPNYHKEPFLQQLKVFSDEVQQQAQLSTIRSFLKLYTTMPVAKLAGFLDLTEQEFRIQLLVFKHKMKNLVWTSGISALDGEFQSASEVDFYIDKDMIHIADTKVARRYGDFFIRQIHKFEELNRTLKKMGQRP</sequence>